<keyword id="KW-0067">ATP-binding</keyword>
<keyword id="KW-0460">Magnesium</keyword>
<keyword id="KW-0547">Nucleotide-binding</keyword>
<keyword id="KW-0808">Transferase</keyword>
<keyword id="KW-0819">tRNA processing</keyword>
<dbReference type="EC" id="2.5.1.75" evidence="1"/>
<dbReference type="EMBL" id="CP000261">
    <property type="protein sequence ID" value="ABF35846.1"/>
    <property type="molecule type" value="Genomic_DNA"/>
</dbReference>
<dbReference type="SMR" id="Q1JC62"/>
<dbReference type="KEGG" id="spj:MGAS2096_Spy0794"/>
<dbReference type="HOGENOM" id="CLU_032616_0_1_9"/>
<dbReference type="GO" id="GO:0005524">
    <property type="term" value="F:ATP binding"/>
    <property type="evidence" value="ECO:0007669"/>
    <property type="project" value="UniProtKB-UniRule"/>
</dbReference>
<dbReference type="GO" id="GO:0052381">
    <property type="term" value="F:tRNA dimethylallyltransferase activity"/>
    <property type="evidence" value="ECO:0007669"/>
    <property type="project" value="UniProtKB-UniRule"/>
</dbReference>
<dbReference type="GO" id="GO:0006400">
    <property type="term" value="P:tRNA modification"/>
    <property type="evidence" value="ECO:0007669"/>
    <property type="project" value="TreeGrafter"/>
</dbReference>
<dbReference type="Gene3D" id="3.40.50.300">
    <property type="entry name" value="P-loop containing nucleotide triphosphate hydrolases"/>
    <property type="match status" value="1"/>
</dbReference>
<dbReference type="HAMAP" id="MF_00185">
    <property type="entry name" value="IPP_trans"/>
    <property type="match status" value="1"/>
</dbReference>
<dbReference type="InterPro" id="IPR039657">
    <property type="entry name" value="Dimethylallyltransferase"/>
</dbReference>
<dbReference type="InterPro" id="IPR018022">
    <property type="entry name" value="IPT"/>
</dbReference>
<dbReference type="InterPro" id="IPR027417">
    <property type="entry name" value="P-loop_NTPase"/>
</dbReference>
<dbReference type="NCBIfam" id="TIGR00174">
    <property type="entry name" value="miaA"/>
    <property type="match status" value="1"/>
</dbReference>
<dbReference type="PANTHER" id="PTHR11088">
    <property type="entry name" value="TRNA DIMETHYLALLYLTRANSFERASE"/>
    <property type="match status" value="1"/>
</dbReference>
<dbReference type="PANTHER" id="PTHR11088:SF60">
    <property type="entry name" value="TRNA DIMETHYLALLYLTRANSFERASE"/>
    <property type="match status" value="1"/>
</dbReference>
<dbReference type="Pfam" id="PF01715">
    <property type="entry name" value="IPPT"/>
    <property type="match status" value="1"/>
</dbReference>
<dbReference type="SUPFAM" id="SSF52540">
    <property type="entry name" value="P-loop containing nucleoside triphosphate hydrolases"/>
    <property type="match status" value="2"/>
</dbReference>
<protein>
    <recommendedName>
        <fullName evidence="1">tRNA dimethylallyltransferase</fullName>
        <ecNumber evidence="1">2.5.1.75</ecNumber>
    </recommendedName>
    <alternativeName>
        <fullName evidence="1">Dimethylallyl diphosphate:tRNA dimethylallyltransferase</fullName>
        <shortName evidence="1">DMAPP:tRNA dimethylallyltransferase</shortName>
        <shortName evidence="1">DMATase</shortName>
    </alternativeName>
    <alternativeName>
        <fullName evidence="1">Isopentenyl-diphosphate:tRNA isopentenyltransferase</fullName>
        <shortName evidence="1">IPP transferase</shortName>
        <shortName evidence="1">IPPT</shortName>
        <shortName evidence="1">IPTase</shortName>
    </alternativeName>
</protein>
<evidence type="ECO:0000255" key="1">
    <source>
        <dbReference type="HAMAP-Rule" id="MF_00185"/>
    </source>
</evidence>
<organism>
    <name type="scientific">Streptococcus pyogenes serotype M12 (strain MGAS2096)</name>
    <dbReference type="NCBI Taxonomy" id="370553"/>
    <lineage>
        <taxon>Bacteria</taxon>
        <taxon>Bacillati</taxon>
        <taxon>Bacillota</taxon>
        <taxon>Bacilli</taxon>
        <taxon>Lactobacillales</taxon>
        <taxon>Streptococcaceae</taxon>
        <taxon>Streptococcus</taxon>
    </lineage>
</organism>
<comment type="function">
    <text evidence="1">Catalyzes the transfer of a dimethylallyl group onto the adenine at position 37 in tRNAs that read codons beginning with uridine, leading to the formation of N6-(dimethylallyl)adenosine (i(6)A).</text>
</comment>
<comment type="catalytic activity">
    <reaction evidence="1">
        <text>adenosine(37) in tRNA + dimethylallyl diphosphate = N(6)-dimethylallyladenosine(37) in tRNA + diphosphate</text>
        <dbReference type="Rhea" id="RHEA:26482"/>
        <dbReference type="Rhea" id="RHEA-COMP:10162"/>
        <dbReference type="Rhea" id="RHEA-COMP:10375"/>
        <dbReference type="ChEBI" id="CHEBI:33019"/>
        <dbReference type="ChEBI" id="CHEBI:57623"/>
        <dbReference type="ChEBI" id="CHEBI:74411"/>
        <dbReference type="ChEBI" id="CHEBI:74415"/>
        <dbReference type="EC" id="2.5.1.75"/>
    </reaction>
</comment>
<comment type="cofactor">
    <cofactor evidence="1">
        <name>Mg(2+)</name>
        <dbReference type="ChEBI" id="CHEBI:18420"/>
    </cofactor>
</comment>
<comment type="subunit">
    <text evidence="1">Monomer.</text>
</comment>
<comment type="similarity">
    <text evidence="1">Belongs to the IPP transferase family.</text>
</comment>
<accession>Q1JC62</accession>
<gene>
    <name evidence="1" type="primary">miaA</name>
    <name type="ordered locus">MGAS2096_Spy0794</name>
</gene>
<sequence>MTKIKIVVIVGPTAVGKTALGISLAKAFNGEIISGDSQQVYRQLDIGTAKATQEEQEAAVHHLIDIREVTESYSAYDFVQDAQKAISDIVSRGKLPIIVGGTGLYLQSLLEGYHLGGQVDQEAVKAYRNELEQLDDHDLYERLQVNNITIEQVNRRRAIRALELAQFADELENAETAYEPLIIGLNDDRQVIYDRINQRVNRMLENGLLEEAKWLYEHYPTVQASRGIGYKELFPYFVGEMTLAEASDQLKQNTRRFAKRQLTWFRNRMAVSFTAITAPDYPQVVHDRVRDFLGQKEKS</sequence>
<feature type="chain" id="PRO_1000020668" description="tRNA dimethylallyltransferase">
    <location>
        <begin position="1"/>
        <end position="299"/>
    </location>
</feature>
<feature type="region of interest" description="Interaction with substrate tRNA" evidence="1">
    <location>
        <begin position="36"/>
        <end position="39"/>
    </location>
</feature>
<feature type="binding site" evidence="1">
    <location>
        <begin position="11"/>
        <end position="18"/>
    </location>
    <ligand>
        <name>ATP</name>
        <dbReference type="ChEBI" id="CHEBI:30616"/>
    </ligand>
</feature>
<feature type="binding site" evidence="1">
    <location>
        <begin position="13"/>
        <end position="18"/>
    </location>
    <ligand>
        <name>substrate</name>
    </ligand>
</feature>
<feature type="site" description="Interaction with substrate tRNA" evidence="1">
    <location>
        <position position="102"/>
    </location>
</feature>
<feature type="site" description="Interaction with substrate tRNA" evidence="1">
    <location>
        <position position="128"/>
    </location>
</feature>
<reference key="1">
    <citation type="journal article" date="2006" name="Proc. Natl. Acad. Sci. U.S.A.">
        <title>Molecular genetic anatomy of inter- and intraserotype variation in the human bacterial pathogen group A Streptococcus.</title>
        <authorList>
            <person name="Beres S.B."/>
            <person name="Richter E.W."/>
            <person name="Nagiec M.J."/>
            <person name="Sumby P."/>
            <person name="Porcella S.F."/>
            <person name="DeLeo F.R."/>
            <person name="Musser J.M."/>
        </authorList>
    </citation>
    <scope>NUCLEOTIDE SEQUENCE [LARGE SCALE GENOMIC DNA]</scope>
    <source>
        <strain>MGAS2096</strain>
    </source>
</reference>
<name>MIAA_STRPB</name>
<proteinExistence type="inferred from homology"/>